<dbReference type="EMBL" id="CU928161">
    <property type="protein sequence ID" value="CAR04782.1"/>
    <property type="molecule type" value="Genomic_DNA"/>
</dbReference>
<dbReference type="RefSeq" id="WP_001300397.1">
    <property type="nucleotide sequence ID" value="NC_011742.1"/>
</dbReference>
<dbReference type="SMR" id="B7MB91"/>
<dbReference type="GeneID" id="93778813"/>
<dbReference type="KEGG" id="ecz:ECS88_3554"/>
<dbReference type="HOGENOM" id="CLU_070525_1_1_6"/>
<dbReference type="Proteomes" id="UP000000747">
    <property type="component" value="Chromosome"/>
</dbReference>
<dbReference type="GO" id="GO:0005829">
    <property type="term" value="C:cytosol"/>
    <property type="evidence" value="ECO:0007669"/>
    <property type="project" value="TreeGrafter"/>
</dbReference>
<dbReference type="GO" id="GO:0000028">
    <property type="term" value="P:ribosomal small subunit assembly"/>
    <property type="evidence" value="ECO:0007669"/>
    <property type="project" value="TreeGrafter"/>
</dbReference>
<dbReference type="GO" id="GO:0006412">
    <property type="term" value="P:translation"/>
    <property type="evidence" value="ECO:0007669"/>
    <property type="project" value="TreeGrafter"/>
</dbReference>
<dbReference type="CDD" id="cd01734">
    <property type="entry name" value="YlxS_C"/>
    <property type="match status" value="1"/>
</dbReference>
<dbReference type="FunFam" id="2.30.30.180:FF:000001">
    <property type="entry name" value="Ribosome maturation factor RimP"/>
    <property type="match status" value="1"/>
</dbReference>
<dbReference type="FunFam" id="3.30.300.70:FF:000001">
    <property type="entry name" value="Ribosome maturation factor RimP"/>
    <property type="match status" value="1"/>
</dbReference>
<dbReference type="Gene3D" id="2.30.30.180">
    <property type="entry name" value="Ribosome maturation factor RimP, C-terminal domain"/>
    <property type="match status" value="1"/>
</dbReference>
<dbReference type="Gene3D" id="3.30.300.70">
    <property type="entry name" value="RimP-like superfamily, N-terminal"/>
    <property type="match status" value="1"/>
</dbReference>
<dbReference type="HAMAP" id="MF_01077">
    <property type="entry name" value="RimP"/>
    <property type="match status" value="1"/>
</dbReference>
<dbReference type="InterPro" id="IPR003728">
    <property type="entry name" value="Ribosome_maturation_RimP"/>
</dbReference>
<dbReference type="InterPro" id="IPR028998">
    <property type="entry name" value="RimP_C"/>
</dbReference>
<dbReference type="InterPro" id="IPR036847">
    <property type="entry name" value="RimP_C_sf"/>
</dbReference>
<dbReference type="InterPro" id="IPR028989">
    <property type="entry name" value="RimP_N"/>
</dbReference>
<dbReference type="InterPro" id="IPR035956">
    <property type="entry name" value="RimP_N_sf"/>
</dbReference>
<dbReference type="NCBIfam" id="NF000927">
    <property type="entry name" value="PRK00092.1-1"/>
    <property type="match status" value="1"/>
</dbReference>
<dbReference type="PANTHER" id="PTHR33867">
    <property type="entry name" value="RIBOSOME MATURATION FACTOR RIMP"/>
    <property type="match status" value="1"/>
</dbReference>
<dbReference type="PANTHER" id="PTHR33867:SF1">
    <property type="entry name" value="RIBOSOME MATURATION FACTOR RIMP"/>
    <property type="match status" value="1"/>
</dbReference>
<dbReference type="Pfam" id="PF17384">
    <property type="entry name" value="DUF150_C"/>
    <property type="match status" value="1"/>
</dbReference>
<dbReference type="Pfam" id="PF02576">
    <property type="entry name" value="RimP_N"/>
    <property type="match status" value="1"/>
</dbReference>
<dbReference type="SUPFAM" id="SSF74942">
    <property type="entry name" value="YhbC-like, C-terminal domain"/>
    <property type="match status" value="1"/>
</dbReference>
<dbReference type="SUPFAM" id="SSF75420">
    <property type="entry name" value="YhbC-like, N-terminal domain"/>
    <property type="match status" value="1"/>
</dbReference>
<evidence type="ECO:0000255" key="1">
    <source>
        <dbReference type="HAMAP-Rule" id="MF_01077"/>
    </source>
</evidence>
<proteinExistence type="inferred from homology"/>
<keyword id="KW-0963">Cytoplasm</keyword>
<keyword id="KW-1185">Reference proteome</keyword>
<keyword id="KW-0690">Ribosome biogenesis</keyword>
<accession>B7MB91</accession>
<feature type="chain" id="PRO_0000384660" description="Ribosome maturation factor RimP">
    <location>
        <begin position="1"/>
        <end position="150"/>
    </location>
</feature>
<protein>
    <recommendedName>
        <fullName evidence="1">Ribosome maturation factor RimP</fullName>
    </recommendedName>
</protein>
<comment type="function">
    <text evidence="1">Required for maturation of 30S ribosomal subunits.</text>
</comment>
<comment type="subcellular location">
    <subcellularLocation>
        <location evidence="1">Cytoplasm</location>
    </subcellularLocation>
</comment>
<comment type="similarity">
    <text evidence="1">Belongs to the RimP family.</text>
</comment>
<name>RIMP_ECO45</name>
<sequence length="150" mass="16651">MSTLEQKLTEMITAPVEALGFELVGIEFIRGRTSTLRIYIDSEDGINVDDCADVSHQVSAVLDVEDPITVAYNLEVSSPGLDRPLFTAEHYARFVGEEVTLVLRMAVQNRRKWQGVIKAVDGEMITVTVEGKDEVFALSNIQKANLVPHF</sequence>
<gene>
    <name evidence="1" type="primary">rimP</name>
    <name type="ordered locus">ECS88_3554</name>
</gene>
<organism>
    <name type="scientific">Escherichia coli O45:K1 (strain S88 / ExPEC)</name>
    <dbReference type="NCBI Taxonomy" id="585035"/>
    <lineage>
        <taxon>Bacteria</taxon>
        <taxon>Pseudomonadati</taxon>
        <taxon>Pseudomonadota</taxon>
        <taxon>Gammaproteobacteria</taxon>
        <taxon>Enterobacterales</taxon>
        <taxon>Enterobacteriaceae</taxon>
        <taxon>Escherichia</taxon>
    </lineage>
</organism>
<reference key="1">
    <citation type="journal article" date="2009" name="PLoS Genet.">
        <title>Organised genome dynamics in the Escherichia coli species results in highly diverse adaptive paths.</title>
        <authorList>
            <person name="Touchon M."/>
            <person name="Hoede C."/>
            <person name="Tenaillon O."/>
            <person name="Barbe V."/>
            <person name="Baeriswyl S."/>
            <person name="Bidet P."/>
            <person name="Bingen E."/>
            <person name="Bonacorsi S."/>
            <person name="Bouchier C."/>
            <person name="Bouvet O."/>
            <person name="Calteau A."/>
            <person name="Chiapello H."/>
            <person name="Clermont O."/>
            <person name="Cruveiller S."/>
            <person name="Danchin A."/>
            <person name="Diard M."/>
            <person name="Dossat C."/>
            <person name="Karoui M.E."/>
            <person name="Frapy E."/>
            <person name="Garry L."/>
            <person name="Ghigo J.M."/>
            <person name="Gilles A.M."/>
            <person name="Johnson J."/>
            <person name="Le Bouguenec C."/>
            <person name="Lescat M."/>
            <person name="Mangenot S."/>
            <person name="Martinez-Jehanne V."/>
            <person name="Matic I."/>
            <person name="Nassif X."/>
            <person name="Oztas S."/>
            <person name="Petit M.A."/>
            <person name="Pichon C."/>
            <person name="Rouy Z."/>
            <person name="Ruf C.S."/>
            <person name="Schneider D."/>
            <person name="Tourret J."/>
            <person name="Vacherie B."/>
            <person name="Vallenet D."/>
            <person name="Medigue C."/>
            <person name="Rocha E.P.C."/>
            <person name="Denamur E."/>
        </authorList>
    </citation>
    <scope>NUCLEOTIDE SEQUENCE [LARGE SCALE GENOMIC DNA]</scope>
    <source>
        <strain>S88 / ExPEC</strain>
    </source>
</reference>